<sequence length="422" mass="45282">MFDKTQTIADFDPDVWQAIVDEGVRQEEHIELIASENYTSPLVMVAQGSKLTNKYAEGYPSKRYYGGCEYVDKVEELAIERAKALFGADYANVQPHSGSQANSAVYAALCAPGDTVLGMSLDHGGHLTHGAKVNFSGKMYNAVQYGLNPETGLVDYEEIAALAREHKPKMIVAGFSAYSQVLDWQKFRDIADEVGAYLMVDMAHVAGLVAAGVYPSPVQIADVTTTTTHKTLRGPRGGIILAKANPEIEKKLNSAVFPGGQGGPLMHVIAGKAISFKEAMSDEYKAYQQRVVDNAKTMAATFIKRGFKIVSGGTENHLMLVDLIGKDYSGKDADAALGAANITVNKNAVPNDPRSPFVTSGLRVGTPAITTRGFGETEVVDLTNWMCDVLESLEAGNSEAVIADVKAKVLDVCGKFPVYGSN</sequence>
<protein>
    <recommendedName>
        <fullName evidence="1">Serine hydroxymethyltransferase</fullName>
        <shortName evidence="1">SHMT</shortName>
        <shortName evidence="1">Serine methylase</shortName>
        <ecNumber evidence="1">2.1.2.1</ecNumber>
    </recommendedName>
</protein>
<reference key="1">
    <citation type="journal article" date="2009" name="PLoS ONE">
        <title>The complete genome of Teredinibacter turnerae T7901: an intracellular endosymbiont of marine wood-boring bivalves (shipworms).</title>
        <authorList>
            <person name="Yang J.C."/>
            <person name="Madupu R."/>
            <person name="Durkin A.S."/>
            <person name="Ekborg N.A."/>
            <person name="Pedamallu C.S."/>
            <person name="Hostetler J.B."/>
            <person name="Radune D."/>
            <person name="Toms B.S."/>
            <person name="Henrissat B."/>
            <person name="Coutinho P.M."/>
            <person name="Schwarz S."/>
            <person name="Field L."/>
            <person name="Trindade-Silva A.E."/>
            <person name="Soares C.A.G."/>
            <person name="Elshahawi S."/>
            <person name="Hanora A."/>
            <person name="Schmidt E.W."/>
            <person name="Haygood M.G."/>
            <person name="Posfai J."/>
            <person name="Benner J."/>
            <person name="Madinger C."/>
            <person name="Nove J."/>
            <person name="Anton B."/>
            <person name="Chaudhary K."/>
            <person name="Foster J."/>
            <person name="Holman A."/>
            <person name="Kumar S."/>
            <person name="Lessard P.A."/>
            <person name="Luyten Y.A."/>
            <person name="Slatko B."/>
            <person name="Wood N."/>
            <person name="Wu B."/>
            <person name="Teplitski M."/>
            <person name="Mougous J.D."/>
            <person name="Ward N."/>
            <person name="Eisen J.A."/>
            <person name="Badger J.H."/>
            <person name="Distel D.L."/>
        </authorList>
    </citation>
    <scope>NUCLEOTIDE SEQUENCE [LARGE SCALE GENOMIC DNA]</scope>
    <source>
        <strain>ATCC 39867 / T7901</strain>
    </source>
</reference>
<comment type="function">
    <text evidence="1">Catalyzes the reversible interconversion of serine and glycine with tetrahydrofolate (THF) serving as the one-carbon carrier. This reaction serves as the major source of one-carbon groups required for the biosynthesis of purines, thymidylate, methionine, and other important biomolecules. Also exhibits THF-independent aldolase activity toward beta-hydroxyamino acids, producing glycine and aldehydes, via a retro-aldol mechanism.</text>
</comment>
<comment type="catalytic activity">
    <reaction evidence="1">
        <text>(6R)-5,10-methylene-5,6,7,8-tetrahydrofolate + glycine + H2O = (6S)-5,6,7,8-tetrahydrofolate + L-serine</text>
        <dbReference type="Rhea" id="RHEA:15481"/>
        <dbReference type="ChEBI" id="CHEBI:15377"/>
        <dbReference type="ChEBI" id="CHEBI:15636"/>
        <dbReference type="ChEBI" id="CHEBI:33384"/>
        <dbReference type="ChEBI" id="CHEBI:57305"/>
        <dbReference type="ChEBI" id="CHEBI:57453"/>
        <dbReference type="EC" id="2.1.2.1"/>
    </reaction>
</comment>
<comment type="cofactor">
    <cofactor evidence="1">
        <name>pyridoxal 5'-phosphate</name>
        <dbReference type="ChEBI" id="CHEBI:597326"/>
    </cofactor>
</comment>
<comment type="pathway">
    <text evidence="1">One-carbon metabolism; tetrahydrofolate interconversion.</text>
</comment>
<comment type="pathway">
    <text evidence="1">Amino-acid biosynthesis; glycine biosynthesis; glycine from L-serine: step 1/1.</text>
</comment>
<comment type="subunit">
    <text evidence="1">Homodimer.</text>
</comment>
<comment type="subcellular location">
    <subcellularLocation>
        <location evidence="1">Cytoplasm</location>
    </subcellularLocation>
</comment>
<comment type="similarity">
    <text evidence="1">Belongs to the SHMT family.</text>
</comment>
<feature type="chain" id="PRO_1000202277" description="Serine hydroxymethyltransferase">
    <location>
        <begin position="1"/>
        <end position="422"/>
    </location>
</feature>
<feature type="binding site" evidence="1">
    <location>
        <position position="121"/>
    </location>
    <ligand>
        <name>(6S)-5,6,7,8-tetrahydrofolate</name>
        <dbReference type="ChEBI" id="CHEBI:57453"/>
    </ligand>
</feature>
<feature type="binding site" evidence="1">
    <location>
        <begin position="125"/>
        <end position="127"/>
    </location>
    <ligand>
        <name>(6S)-5,6,7,8-tetrahydrofolate</name>
        <dbReference type="ChEBI" id="CHEBI:57453"/>
    </ligand>
</feature>
<feature type="binding site" evidence="1">
    <location>
        <begin position="355"/>
        <end position="357"/>
    </location>
    <ligand>
        <name>(6S)-5,6,7,8-tetrahydrofolate</name>
        <dbReference type="ChEBI" id="CHEBI:57453"/>
    </ligand>
</feature>
<feature type="site" description="Plays an important role in substrate specificity" evidence="1">
    <location>
        <position position="229"/>
    </location>
</feature>
<feature type="modified residue" description="N6-(pyridoxal phosphate)lysine" evidence="1">
    <location>
        <position position="230"/>
    </location>
</feature>
<gene>
    <name evidence="1" type="primary">glyA</name>
    <name type="ordered locus">TERTU_3707</name>
</gene>
<dbReference type="EC" id="2.1.2.1" evidence="1"/>
<dbReference type="EMBL" id="CP001614">
    <property type="protein sequence ID" value="ACR12702.1"/>
    <property type="molecule type" value="Genomic_DNA"/>
</dbReference>
<dbReference type="RefSeq" id="WP_015818814.1">
    <property type="nucleotide sequence ID" value="NC_012997.1"/>
</dbReference>
<dbReference type="SMR" id="C5BS91"/>
<dbReference type="STRING" id="377629.TERTU_3707"/>
<dbReference type="GeneID" id="58411014"/>
<dbReference type="KEGG" id="ttu:TERTU_3707"/>
<dbReference type="eggNOG" id="COG0112">
    <property type="taxonomic scope" value="Bacteria"/>
</dbReference>
<dbReference type="HOGENOM" id="CLU_022477_2_1_6"/>
<dbReference type="OrthoDB" id="9803846at2"/>
<dbReference type="UniPathway" id="UPA00193"/>
<dbReference type="UniPathway" id="UPA00288">
    <property type="reaction ID" value="UER01023"/>
</dbReference>
<dbReference type="Proteomes" id="UP000009080">
    <property type="component" value="Chromosome"/>
</dbReference>
<dbReference type="GO" id="GO:0005829">
    <property type="term" value="C:cytosol"/>
    <property type="evidence" value="ECO:0007669"/>
    <property type="project" value="TreeGrafter"/>
</dbReference>
<dbReference type="GO" id="GO:0004372">
    <property type="term" value="F:glycine hydroxymethyltransferase activity"/>
    <property type="evidence" value="ECO:0007669"/>
    <property type="project" value="UniProtKB-UniRule"/>
</dbReference>
<dbReference type="GO" id="GO:0030170">
    <property type="term" value="F:pyridoxal phosphate binding"/>
    <property type="evidence" value="ECO:0007669"/>
    <property type="project" value="UniProtKB-UniRule"/>
</dbReference>
<dbReference type="GO" id="GO:0019264">
    <property type="term" value="P:glycine biosynthetic process from serine"/>
    <property type="evidence" value="ECO:0007669"/>
    <property type="project" value="UniProtKB-UniRule"/>
</dbReference>
<dbReference type="GO" id="GO:0035999">
    <property type="term" value="P:tetrahydrofolate interconversion"/>
    <property type="evidence" value="ECO:0007669"/>
    <property type="project" value="UniProtKB-UniRule"/>
</dbReference>
<dbReference type="CDD" id="cd00378">
    <property type="entry name" value="SHMT"/>
    <property type="match status" value="1"/>
</dbReference>
<dbReference type="FunFam" id="3.40.640.10:FF:000001">
    <property type="entry name" value="Serine hydroxymethyltransferase"/>
    <property type="match status" value="1"/>
</dbReference>
<dbReference type="FunFam" id="3.90.1150.10:FF:000003">
    <property type="entry name" value="Serine hydroxymethyltransferase"/>
    <property type="match status" value="1"/>
</dbReference>
<dbReference type="Gene3D" id="3.90.1150.10">
    <property type="entry name" value="Aspartate Aminotransferase, domain 1"/>
    <property type="match status" value="1"/>
</dbReference>
<dbReference type="Gene3D" id="3.40.640.10">
    <property type="entry name" value="Type I PLP-dependent aspartate aminotransferase-like (Major domain)"/>
    <property type="match status" value="1"/>
</dbReference>
<dbReference type="HAMAP" id="MF_00051">
    <property type="entry name" value="SHMT"/>
    <property type="match status" value="1"/>
</dbReference>
<dbReference type="InterPro" id="IPR015424">
    <property type="entry name" value="PyrdxlP-dep_Trfase"/>
</dbReference>
<dbReference type="InterPro" id="IPR015421">
    <property type="entry name" value="PyrdxlP-dep_Trfase_major"/>
</dbReference>
<dbReference type="InterPro" id="IPR015422">
    <property type="entry name" value="PyrdxlP-dep_Trfase_small"/>
</dbReference>
<dbReference type="InterPro" id="IPR001085">
    <property type="entry name" value="Ser_HO-MeTrfase"/>
</dbReference>
<dbReference type="InterPro" id="IPR049943">
    <property type="entry name" value="Ser_HO-MeTrfase-like"/>
</dbReference>
<dbReference type="InterPro" id="IPR019798">
    <property type="entry name" value="Ser_HO-MeTrfase_PLP_BS"/>
</dbReference>
<dbReference type="InterPro" id="IPR039429">
    <property type="entry name" value="SHMT-like_dom"/>
</dbReference>
<dbReference type="NCBIfam" id="NF000586">
    <property type="entry name" value="PRK00011.1"/>
    <property type="match status" value="1"/>
</dbReference>
<dbReference type="PANTHER" id="PTHR11680">
    <property type="entry name" value="SERINE HYDROXYMETHYLTRANSFERASE"/>
    <property type="match status" value="1"/>
</dbReference>
<dbReference type="PANTHER" id="PTHR11680:SF50">
    <property type="entry name" value="SERINE HYDROXYMETHYLTRANSFERASE"/>
    <property type="match status" value="1"/>
</dbReference>
<dbReference type="Pfam" id="PF00464">
    <property type="entry name" value="SHMT"/>
    <property type="match status" value="1"/>
</dbReference>
<dbReference type="PIRSF" id="PIRSF000412">
    <property type="entry name" value="SHMT"/>
    <property type="match status" value="1"/>
</dbReference>
<dbReference type="SUPFAM" id="SSF53383">
    <property type="entry name" value="PLP-dependent transferases"/>
    <property type="match status" value="1"/>
</dbReference>
<dbReference type="PROSITE" id="PS00096">
    <property type="entry name" value="SHMT"/>
    <property type="match status" value="1"/>
</dbReference>
<organism>
    <name type="scientific">Teredinibacter turnerae (strain ATCC 39867 / T7901)</name>
    <dbReference type="NCBI Taxonomy" id="377629"/>
    <lineage>
        <taxon>Bacteria</taxon>
        <taxon>Pseudomonadati</taxon>
        <taxon>Pseudomonadota</taxon>
        <taxon>Gammaproteobacteria</taxon>
        <taxon>Cellvibrionales</taxon>
        <taxon>Cellvibrionaceae</taxon>
        <taxon>Teredinibacter</taxon>
    </lineage>
</organism>
<keyword id="KW-0028">Amino-acid biosynthesis</keyword>
<keyword id="KW-0963">Cytoplasm</keyword>
<keyword id="KW-0554">One-carbon metabolism</keyword>
<keyword id="KW-0663">Pyridoxal phosphate</keyword>
<keyword id="KW-1185">Reference proteome</keyword>
<keyword id="KW-0808">Transferase</keyword>
<accession>C5BS91</accession>
<evidence type="ECO:0000255" key="1">
    <source>
        <dbReference type="HAMAP-Rule" id="MF_00051"/>
    </source>
</evidence>
<proteinExistence type="inferred from homology"/>
<name>GLYA_TERTT</name>